<comment type="function">
    <text evidence="1">This protein is located at the 30S-50S ribosomal subunit interface and may play a role in the structure and function of the aminoacyl-tRNA binding site.</text>
</comment>
<comment type="similarity">
    <text evidence="1">Belongs to the bacterial ribosomal protein bL19 family.</text>
</comment>
<dbReference type="EMBL" id="CP000492">
    <property type="protein sequence ID" value="ABL65543.1"/>
    <property type="molecule type" value="Genomic_DNA"/>
</dbReference>
<dbReference type="RefSeq" id="WP_011745355.1">
    <property type="nucleotide sequence ID" value="NC_008639.1"/>
</dbReference>
<dbReference type="SMR" id="A1BGL6"/>
<dbReference type="STRING" id="290317.Cpha266_1521"/>
<dbReference type="KEGG" id="cph:Cpha266_1521"/>
<dbReference type="eggNOG" id="COG0335">
    <property type="taxonomic scope" value="Bacteria"/>
</dbReference>
<dbReference type="HOGENOM" id="CLU_103507_2_1_10"/>
<dbReference type="OrthoDB" id="9803541at2"/>
<dbReference type="Proteomes" id="UP000008701">
    <property type="component" value="Chromosome"/>
</dbReference>
<dbReference type="GO" id="GO:0022625">
    <property type="term" value="C:cytosolic large ribosomal subunit"/>
    <property type="evidence" value="ECO:0007669"/>
    <property type="project" value="TreeGrafter"/>
</dbReference>
<dbReference type="GO" id="GO:0003735">
    <property type="term" value="F:structural constituent of ribosome"/>
    <property type="evidence" value="ECO:0007669"/>
    <property type="project" value="InterPro"/>
</dbReference>
<dbReference type="GO" id="GO:0006412">
    <property type="term" value="P:translation"/>
    <property type="evidence" value="ECO:0007669"/>
    <property type="project" value="UniProtKB-UniRule"/>
</dbReference>
<dbReference type="FunFam" id="2.30.30.790:FF:000001">
    <property type="entry name" value="50S ribosomal protein L19"/>
    <property type="match status" value="1"/>
</dbReference>
<dbReference type="Gene3D" id="2.30.30.790">
    <property type="match status" value="1"/>
</dbReference>
<dbReference type="HAMAP" id="MF_00402">
    <property type="entry name" value="Ribosomal_bL19"/>
    <property type="match status" value="1"/>
</dbReference>
<dbReference type="InterPro" id="IPR001857">
    <property type="entry name" value="Ribosomal_bL19"/>
</dbReference>
<dbReference type="InterPro" id="IPR018257">
    <property type="entry name" value="Ribosomal_bL19_CS"/>
</dbReference>
<dbReference type="InterPro" id="IPR038657">
    <property type="entry name" value="Ribosomal_bL19_sf"/>
</dbReference>
<dbReference type="InterPro" id="IPR008991">
    <property type="entry name" value="Translation_prot_SH3-like_sf"/>
</dbReference>
<dbReference type="NCBIfam" id="TIGR01024">
    <property type="entry name" value="rplS_bact"/>
    <property type="match status" value="1"/>
</dbReference>
<dbReference type="PANTHER" id="PTHR15680:SF9">
    <property type="entry name" value="LARGE RIBOSOMAL SUBUNIT PROTEIN BL19M"/>
    <property type="match status" value="1"/>
</dbReference>
<dbReference type="PANTHER" id="PTHR15680">
    <property type="entry name" value="RIBOSOMAL PROTEIN L19"/>
    <property type="match status" value="1"/>
</dbReference>
<dbReference type="Pfam" id="PF01245">
    <property type="entry name" value="Ribosomal_L19"/>
    <property type="match status" value="1"/>
</dbReference>
<dbReference type="PIRSF" id="PIRSF002191">
    <property type="entry name" value="Ribosomal_L19"/>
    <property type="match status" value="1"/>
</dbReference>
<dbReference type="PRINTS" id="PR00061">
    <property type="entry name" value="RIBOSOMALL19"/>
</dbReference>
<dbReference type="SUPFAM" id="SSF50104">
    <property type="entry name" value="Translation proteins SH3-like domain"/>
    <property type="match status" value="1"/>
</dbReference>
<dbReference type="PROSITE" id="PS01015">
    <property type="entry name" value="RIBOSOMAL_L19"/>
    <property type="match status" value="1"/>
</dbReference>
<reference key="1">
    <citation type="submission" date="2006-12" db="EMBL/GenBank/DDBJ databases">
        <title>Complete sequence of Chlorobium phaeobacteroides DSM 266.</title>
        <authorList>
            <consortium name="US DOE Joint Genome Institute"/>
            <person name="Copeland A."/>
            <person name="Lucas S."/>
            <person name="Lapidus A."/>
            <person name="Barry K."/>
            <person name="Detter J.C."/>
            <person name="Glavina del Rio T."/>
            <person name="Hammon N."/>
            <person name="Israni S."/>
            <person name="Pitluck S."/>
            <person name="Goltsman E."/>
            <person name="Schmutz J."/>
            <person name="Larimer F."/>
            <person name="Land M."/>
            <person name="Hauser L."/>
            <person name="Mikhailova N."/>
            <person name="Li T."/>
            <person name="Overmann J."/>
            <person name="Bryant D.A."/>
            <person name="Richardson P."/>
        </authorList>
    </citation>
    <scope>NUCLEOTIDE SEQUENCE [LARGE SCALE GENOMIC DNA]</scope>
    <source>
        <strain>DSM 266 / SMG 266 / 2430</strain>
    </source>
</reference>
<name>RL19_CHLPD</name>
<sequence>MDQLIQLVEASEARNDFPAINPGDTVKIQLKVIEGEKERLQAFEGVVISDRGAGGSKTITVRKISHGVGVERIIPVNSPNIESITVLKHGKARRAKLFYLRKRTGKAALKVKARKVVEKA</sequence>
<protein>
    <recommendedName>
        <fullName evidence="1">Large ribosomal subunit protein bL19</fullName>
    </recommendedName>
    <alternativeName>
        <fullName evidence="2">50S ribosomal protein L19</fullName>
    </alternativeName>
</protein>
<organism>
    <name type="scientific">Chlorobium phaeobacteroides (strain DSM 266 / SMG 266 / 2430)</name>
    <dbReference type="NCBI Taxonomy" id="290317"/>
    <lineage>
        <taxon>Bacteria</taxon>
        <taxon>Pseudomonadati</taxon>
        <taxon>Chlorobiota</taxon>
        <taxon>Chlorobiia</taxon>
        <taxon>Chlorobiales</taxon>
        <taxon>Chlorobiaceae</taxon>
        <taxon>Chlorobium/Pelodictyon group</taxon>
        <taxon>Chlorobium</taxon>
    </lineage>
</organism>
<accession>A1BGL6</accession>
<evidence type="ECO:0000255" key="1">
    <source>
        <dbReference type="HAMAP-Rule" id="MF_00402"/>
    </source>
</evidence>
<evidence type="ECO:0000305" key="2"/>
<feature type="chain" id="PRO_1000049657" description="Large ribosomal subunit protein bL19">
    <location>
        <begin position="1"/>
        <end position="120"/>
    </location>
</feature>
<proteinExistence type="inferred from homology"/>
<keyword id="KW-1185">Reference proteome</keyword>
<keyword id="KW-0687">Ribonucleoprotein</keyword>
<keyword id="KW-0689">Ribosomal protein</keyword>
<gene>
    <name evidence="1" type="primary">rplS</name>
    <name type="ordered locus">Cpha266_1521</name>
</gene>